<organism>
    <name type="scientific">Klebsiella pneumoniae subsp. pneumoniae (strain ATCC 700721 / MGH 78578)</name>
    <dbReference type="NCBI Taxonomy" id="272620"/>
    <lineage>
        <taxon>Bacteria</taxon>
        <taxon>Pseudomonadati</taxon>
        <taxon>Pseudomonadota</taxon>
        <taxon>Gammaproteobacteria</taxon>
        <taxon>Enterobacterales</taxon>
        <taxon>Enterobacteriaceae</taxon>
        <taxon>Klebsiella/Raoultella group</taxon>
        <taxon>Klebsiella</taxon>
        <taxon>Klebsiella pneumoniae complex</taxon>
    </lineage>
</organism>
<evidence type="ECO:0000255" key="1">
    <source>
        <dbReference type="HAMAP-Rule" id="MF_02051"/>
    </source>
</evidence>
<dbReference type="EC" id="5.3.1.32" evidence="1"/>
<dbReference type="EMBL" id="CP000647">
    <property type="protein sequence ID" value="ABR78897.1"/>
    <property type="molecule type" value="Genomic_DNA"/>
</dbReference>
<dbReference type="RefSeq" id="WP_004181386.1">
    <property type="nucleotide sequence ID" value="NC_009648.1"/>
</dbReference>
<dbReference type="SMR" id="A6TEB3"/>
<dbReference type="STRING" id="272620.KPN_03502"/>
<dbReference type="jPOST" id="A6TEB3"/>
<dbReference type="PaxDb" id="272620-KPN_03502"/>
<dbReference type="EnsemblBacteria" id="ABR78897">
    <property type="protein sequence ID" value="ABR78897"/>
    <property type="gene ID" value="KPN_03502"/>
</dbReference>
<dbReference type="GeneID" id="93313910"/>
<dbReference type="KEGG" id="kpn:KPN_03502"/>
<dbReference type="HOGENOM" id="CLU_131496_3_0_6"/>
<dbReference type="Proteomes" id="UP000000265">
    <property type="component" value="Chromosome"/>
</dbReference>
<dbReference type="GO" id="GO:0005829">
    <property type="term" value="C:cytosol"/>
    <property type="evidence" value="ECO:0007669"/>
    <property type="project" value="TreeGrafter"/>
</dbReference>
<dbReference type="GO" id="GO:0002952">
    <property type="term" value="F:(4S)-4-hydroxy-5-phosphonooxypentane-2,3-dione isomerase activity"/>
    <property type="evidence" value="ECO:0007669"/>
    <property type="project" value="UniProtKB-EC"/>
</dbReference>
<dbReference type="GO" id="GO:0016491">
    <property type="term" value="F:oxidoreductase activity"/>
    <property type="evidence" value="ECO:0007669"/>
    <property type="project" value="TreeGrafter"/>
</dbReference>
<dbReference type="FunFam" id="3.30.70.100:FF:000016">
    <property type="entry name" value="(4S)-4-hydroxy-5-phosphonooxypentane-2,3-dione isomerase"/>
    <property type="match status" value="1"/>
</dbReference>
<dbReference type="Gene3D" id="3.30.70.100">
    <property type="match status" value="1"/>
</dbReference>
<dbReference type="HAMAP" id="MF_02051">
    <property type="entry name" value="LsrG"/>
    <property type="match status" value="1"/>
</dbReference>
<dbReference type="InterPro" id="IPR007138">
    <property type="entry name" value="ABM_dom"/>
</dbReference>
<dbReference type="InterPro" id="IPR050744">
    <property type="entry name" value="AI-2_Isomerase_LsrG"/>
</dbReference>
<dbReference type="InterPro" id="IPR011008">
    <property type="entry name" value="Dimeric_a/b-barrel"/>
</dbReference>
<dbReference type="InterPro" id="IPR033672">
    <property type="entry name" value="LsrG"/>
</dbReference>
<dbReference type="NCBIfam" id="NF007791">
    <property type="entry name" value="PRK10486.1"/>
    <property type="match status" value="1"/>
</dbReference>
<dbReference type="PANTHER" id="PTHR33336:SF1">
    <property type="entry name" value="(4S)-4-HYDROXY-5-PHOSPHONOOXYPENTANE-2,3-DIONE ISOMERASE"/>
    <property type="match status" value="1"/>
</dbReference>
<dbReference type="PANTHER" id="PTHR33336">
    <property type="entry name" value="QUINOL MONOOXYGENASE YGIN-RELATED"/>
    <property type="match status" value="1"/>
</dbReference>
<dbReference type="Pfam" id="PF03992">
    <property type="entry name" value="ABM"/>
    <property type="match status" value="1"/>
</dbReference>
<dbReference type="SUPFAM" id="SSF54909">
    <property type="entry name" value="Dimeric alpha+beta barrel"/>
    <property type="match status" value="1"/>
</dbReference>
<dbReference type="PROSITE" id="PS51725">
    <property type="entry name" value="ABM"/>
    <property type="match status" value="1"/>
</dbReference>
<feature type="chain" id="PRO_0000351567" description="(4S)-4-hydroxy-5-phosphonooxypentane-2,3-dione isomerase">
    <location>
        <begin position="1"/>
        <end position="98"/>
    </location>
</feature>
<feature type="domain" description="ABM" evidence="1">
    <location>
        <begin position="2"/>
        <end position="91"/>
    </location>
</feature>
<protein>
    <recommendedName>
        <fullName evidence="1">(4S)-4-hydroxy-5-phosphonooxypentane-2,3-dione isomerase</fullName>
        <ecNumber evidence="1">5.3.1.32</ecNumber>
    </recommendedName>
    <alternativeName>
        <fullName evidence="1">Autoinducer 2-degrading protein LsrG</fullName>
        <shortName evidence="1">AI-2-degrading protein LsrG</shortName>
    </alternativeName>
    <alternativeName>
        <fullName evidence="1">Phospho-(S)-4,5-dihydroxy-2,3-pentanedione isomerase</fullName>
    </alternativeName>
    <alternativeName>
        <fullName evidence="1">Phospho-AI-2 isomerase</fullName>
    </alternativeName>
</protein>
<comment type="function">
    <text evidence="1">Involved in the degradation of phospho-AI-2, thereby terminating induction of the lsr operon and closing the AI-2 signaling cycle. Catalyzes the conversion of (4S)-4-hydroxy-5-phosphonooxypentane-2,3-dione (P-DPD) to 3-hydroxy-5-phosphonooxypentane-2,4-dione (P-HPD).</text>
</comment>
<comment type="catalytic activity">
    <reaction evidence="1">
        <text>(2S)-2-hydroxy-3,4-dioxopentyl phosphate = 3-hydroxy-2,4-dioxopentyl phosphate</text>
        <dbReference type="Rhea" id="RHEA:44360"/>
        <dbReference type="ChEBI" id="CHEBI:71677"/>
        <dbReference type="ChEBI" id="CHEBI:84359"/>
        <dbReference type="EC" id="5.3.1.32"/>
    </reaction>
</comment>
<comment type="subunit">
    <text evidence="1">Homodimer.</text>
</comment>
<comment type="subcellular location">
    <subcellularLocation>
        <location evidence="1">Cytoplasm</location>
    </subcellularLocation>
</comment>
<comment type="similarity">
    <text evidence="1">Belongs to the LsrG family.</text>
</comment>
<gene>
    <name evidence="1" type="primary">lsrG</name>
    <name type="ordered locus">KPN78578_34730</name>
    <name type="ORF">KPN_03502</name>
</gene>
<name>LSRG_KLEP7</name>
<keyword id="KW-0963">Cytoplasm</keyword>
<keyword id="KW-0413">Isomerase</keyword>
<reference key="1">
    <citation type="submission" date="2006-09" db="EMBL/GenBank/DDBJ databases">
        <authorList>
            <consortium name="The Klebsiella pneumonia Genome Sequencing Project"/>
            <person name="McClelland M."/>
            <person name="Sanderson E.K."/>
            <person name="Spieth J."/>
            <person name="Clifton W.S."/>
            <person name="Latreille P."/>
            <person name="Sabo A."/>
            <person name="Pepin K."/>
            <person name="Bhonagiri V."/>
            <person name="Porwollik S."/>
            <person name="Ali J."/>
            <person name="Wilson R.K."/>
        </authorList>
    </citation>
    <scope>NUCLEOTIDE SEQUENCE [LARGE SCALE GENOMIC DNA]</scope>
    <source>
        <strain>ATCC 700721 / MGH 78578</strain>
    </source>
</reference>
<proteinExistence type="inferred from homology"/>
<sequence length="98" mass="11517">MNVTLVEINIKPERVDEFLEVFRANHEGALREPGNLRFDVLQDPEVKTRFFIYEAYKDDEAVLAHKKTPHYLACVEKLEEMMSQPRQKRSFIGLLPQV</sequence>
<accession>A6TEB3</accession>